<dbReference type="EMBL" id="EU771092">
    <property type="protein sequence ID" value="ACE96031.1"/>
    <property type="molecule type" value="Genomic_DNA"/>
</dbReference>
<dbReference type="EMBL" id="M14782">
    <property type="protein sequence ID" value="AAA32281.1"/>
    <property type="molecule type" value="Genomic_DNA"/>
</dbReference>
<dbReference type="PIR" id="C25816">
    <property type="entry name" value="WMBPHF"/>
</dbReference>
<dbReference type="RefSeq" id="YP_002004537.1">
    <property type="nucleotide sequence ID" value="NC_011048.1"/>
</dbReference>
<dbReference type="PDB" id="3QC7">
    <property type="method" value="X-ray"/>
    <property type="resolution" value="1.52 A"/>
    <property type="chains" value="A=110-280"/>
</dbReference>
<dbReference type="PDB" id="6QVK">
    <property type="method" value="EM"/>
    <property type="resolution" value="3.60 A"/>
    <property type="chains" value="1e/1f/1g/1h/1i/1j/1k/1l/1m/1n/1o/1p/1q/1r/1s/1t/1u/1v/1w/1x/2Z/2a/2b/2c/2d/2e/2f/2g/2h/2i=1-280"/>
</dbReference>
<dbReference type="PDB" id="6QYD">
    <property type="method" value="EM"/>
    <property type="resolution" value="3.20 A"/>
    <property type="chains" value="1e/1f/1g/1h/1i/1j/1k/1l/1m/1n/1o/1p/1q/1r/1s/1t/1u/1v/1w/1x/2Z/2a/2b/2c/2d/2e/2f/2g/2h/2i=1-280"/>
</dbReference>
<dbReference type="PDB" id="6QYY">
    <property type="method" value="X-ray"/>
    <property type="resolution" value="1.80 A"/>
    <property type="chains" value="A/B/C/D/E/F=1-116"/>
</dbReference>
<dbReference type="PDB" id="6QZ0">
    <property type="method" value="EM"/>
    <property type="resolution" value="3.20 A"/>
    <property type="chains" value="1e/1f/1g/1h/1i/1j/1k/1l/1m/1n/1o/1p/1q/1r/1s/1t/1u/1v/1w/1x/2Z/2a/2b/2c/2d/2e/2f/2g/2h/2i=1-280"/>
</dbReference>
<dbReference type="PDBsum" id="3QC7"/>
<dbReference type="PDBsum" id="6QVK"/>
<dbReference type="PDBsum" id="6QYD"/>
<dbReference type="PDBsum" id="6QYY"/>
<dbReference type="PDBsum" id="6QZ0"/>
<dbReference type="EMDB" id="EMD-4655"/>
<dbReference type="EMDB" id="EMD-4677"/>
<dbReference type="EMDB" id="EMD-4681"/>
<dbReference type="SMR" id="B3VMP4"/>
<dbReference type="DIP" id="DIP-59620N"/>
<dbReference type="GeneID" id="6446512"/>
<dbReference type="KEGG" id="vg:6446512"/>
<dbReference type="EvolutionaryTrace" id="B3VMP4"/>
<dbReference type="Proteomes" id="UP000001207">
    <property type="component" value="Genome"/>
</dbReference>
<dbReference type="GO" id="GO:0098022">
    <property type="term" value="C:viral capsid, fiber"/>
    <property type="evidence" value="ECO:0000314"/>
    <property type="project" value="UniProtKB"/>
</dbReference>
<dbReference type="GO" id="GO:0046729">
    <property type="term" value="C:viral procapsid"/>
    <property type="evidence" value="ECO:0000314"/>
    <property type="project" value="CACAO"/>
</dbReference>
<dbReference type="GO" id="GO:0042802">
    <property type="term" value="F:identical protein binding"/>
    <property type="evidence" value="ECO:0000353"/>
    <property type="project" value="IntAct"/>
</dbReference>
<dbReference type="GO" id="GO:0046718">
    <property type="term" value="P:symbiont entry into host cell"/>
    <property type="evidence" value="ECO:0007669"/>
    <property type="project" value="UniProtKB-KW"/>
</dbReference>
<dbReference type="GO" id="GO:0019062">
    <property type="term" value="P:virion attachment to host cell"/>
    <property type="evidence" value="ECO:0007669"/>
    <property type="project" value="UniProtKB-KW"/>
</dbReference>
<dbReference type="Gene3D" id="6.10.140.1630">
    <property type="match status" value="1"/>
</dbReference>
<dbReference type="InterPro" id="IPR022741">
    <property type="entry name" value="Phage_B103_Gp8"/>
</dbReference>
<dbReference type="Pfam" id="PF11133">
    <property type="entry name" value="Phage_head_fibr"/>
    <property type="match status" value="1"/>
</dbReference>
<feature type="chain" id="PRO_0000432921" description="Capsid fiber protein">
    <location>
        <begin position="1"/>
        <end position="280"/>
    </location>
</feature>
<feature type="sequence conflict" description="In Ref. 2; AAA32281." evidence="4" ref="2">
    <original>L</original>
    <variation>I</variation>
    <location>
        <position position="242"/>
    </location>
</feature>
<feature type="strand" evidence="8">
    <location>
        <begin position="3"/>
        <end position="11"/>
    </location>
</feature>
<feature type="strand" evidence="8">
    <location>
        <begin position="18"/>
        <end position="23"/>
    </location>
</feature>
<feature type="strand" evidence="8">
    <location>
        <begin position="25"/>
        <end position="32"/>
    </location>
</feature>
<feature type="strand" evidence="8">
    <location>
        <begin position="40"/>
        <end position="42"/>
    </location>
</feature>
<feature type="strand" evidence="8">
    <location>
        <begin position="52"/>
        <end position="57"/>
    </location>
</feature>
<feature type="strand" evidence="8">
    <location>
        <begin position="60"/>
        <end position="69"/>
    </location>
</feature>
<feature type="strand" evidence="8">
    <location>
        <begin position="76"/>
        <end position="79"/>
    </location>
</feature>
<feature type="helix" evidence="8">
    <location>
        <begin position="81"/>
        <end position="83"/>
    </location>
</feature>
<feature type="strand" evidence="8">
    <location>
        <begin position="85"/>
        <end position="87"/>
    </location>
</feature>
<feature type="helix" evidence="8">
    <location>
        <begin position="91"/>
        <end position="93"/>
    </location>
</feature>
<feature type="strand" evidence="8">
    <location>
        <begin position="96"/>
        <end position="100"/>
    </location>
</feature>
<feature type="strand" evidence="8">
    <location>
        <begin position="106"/>
        <end position="112"/>
    </location>
</feature>
<feature type="helix" evidence="7">
    <location>
        <begin position="122"/>
        <end position="124"/>
    </location>
</feature>
<feature type="helix" evidence="7">
    <location>
        <begin position="130"/>
        <end position="137"/>
    </location>
</feature>
<feature type="helix" evidence="7">
    <location>
        <begin position="141"/>
        <end position="148"/>
    </location>
</feature>
<feature type="helix" evidence="7">
    <location>
        <begin position="152"/>
        <end position="158"/>
    </location>
</feature>
<feature type="helix" evidence="7">
    <location>
        <begin position="164"/>
        <end position="174"/>
    </location>
</feature>
<feature type="helix" evidence="7">
    <location>
        <begin position="178"/>
        <end position="184"/>
    </location>
</feature>
<feature type="helix" evidence="7">
    <location>
        <begin position="190"/>
        <end position="200"/>
    </location>
</feature>
<feature type="helix" evidence="7">
    <location>
        <begin position="204"/>
        <end position="210"/>
    </location>
</feature>
<feature type="helix" evidence="7">
    <location>
        <begin position="216"/>
        <end position="226"/>
    </location>
</feature>
<feature type="strand" evidence="7">
    <location>
        <begin position="239"/>
        <end position="241"/>
    </location>
</feature>
<feature type="helix" evidence="7">
    <location>
        <begin position="259"/>
        <end position="275"/>
    </location>
</feature>
<comment type="function">
    <text evidence="3">Protein that forms the 55 capsid fibers. These fibers are not always present and may have been lost in some lab strains. They may enhance the attachment of the virions onto the host cell wall.</text>
</comment>
<comment type="subunit">
    <text evidence="2">Homotrimer. Forms a super helix coiled coil in the homotrimer.</text>
</comment>
<comment type="interaction">
    <interactant intactId="EBI-15914419">
        <id>B3VMP4</id>
    </interactant>
    <interactant intactId="EBI-15914419">
        <id>B3VMP4</id>
        <label>8.5</label>
    </interactant>
    <organismsDiffer>false</organismsDiffer>
    <experiments>2</experiments>
</comment>
<comment type="subcellular location">
    <subcellularLocation>
        <location evidence="1 3">Virion</location>
    </subcellularLocation>
</comment>
<comment type="similarity">
    <text evidence="4">Belongs to the phi29likevirus major capsid fiber protein family.</text>
</comment>
<gene>
    <name evidence="5" type="primary">8.5</name>
</gene>
<keyword id="KW-0002">3D-structure</keyword>
<keyword id="KW-0945">Host-virus interaction</keyword>
<keyword id="KW-0426">Late protein</keyword>
<keyword id="KW-1185">Reference proteome</keyword>
<keyword id="KW-1161">Viral attachment to host cell</keyword>
<keyword id="KW-0946">Virion</keyword>
<keyword id="KW-1160">Virus entry into host cell</keyword>
<proteinExistence type="evidence at protein level"/>
<accession>B3VMP4</accession>
<accession>P20344</accession>
<organism evidence="6">
    <name type="scientific">Bacillus phage phi29</name>
    <name type="common">Bacteriophage phi-29</name>
    <dbReference type="NCBI Taxonomy" id="2884424"/>
    <lineage>
        <taxon>Viruses</taxon>
        <taxon>Duplodnaviria</taxon>
        <taxon>Heunggongvirae</taxon>
        <taxon>Uroviricota</taxon>
        <taxon>Caudoviricetes</taxon>
        <taxon>Salasmaviridae</taxon>
        <taxon>Picovirinae</taxon>
        <taxon>Salasvirus</taxon>
        <taxon>Salasvirus phi29</taxon>
    </lineage>
</organism>
<name>CAPSF_BPPH2</name>
<reference key="1">
    <citation type="submission" date="2008-05" db="EMBL/GenBank/DDBJ databases">
        <authorList>
            <person name="Villegas A.P."/>
            <person name="Lingohr E.J."/>
            <person name="Ceyssens P.-J."/>
            <person name="Kropinski A.M."/>
        </authorList>
    </citation>
    <scope>NUCLEOTIDE SEQUENCE [GENOMIC DNA]</scope>
</reference>
<reference key="2">
    <citation type="journal article" date="1986" name="Gene">
        <title>Nucleotide sequence of the late region of Bacillus phage phi 29 completes the 19,285-bp sequence of phi 29 genome. Comparison with the homologous sequence of phage PZA.</title>
        <authorList>
            <person name="Vlcek C."/>
            <person name="Paces V."/>
        </authorList>
    </citation>
    <scope>NUCLEOTIDE SEQUENCE [GENOMIC DNA]</scope>
</reference>
<reference key="3">
    <citation type="journal article" date="1977" name="J. Virol.">
        <title>Morphogenesis of bacteriophage phi 29 of Bacillus subtilis: mapping and functional analysis of the head fiber gene.</title>
        <authorList>
            <person name="Reilly B.E."/>
            <person name="Nelson R.A."/>
            <person name="Anderson D.L."/>
        </authorList>
    </citation>
    <scope>FUNCTION</scope>
    <scope>SUBCELLULAR LOCATION</scope>
</reference>
<reference key="4">
    <citation type="journal article" date="2001" name="J. Struct. Biol.">
        <title>Composition and mass of the bacteriophage phi29 prohead and virion.</title>
        <authorList>
            <person name="Peterson C."/>
            <person name="Simon M."/>
            <person name="Hodges J."/>
            <person name="Mertens P."/>
            <person name="Higgins L."/>
            <person name="Egelman E."/>
            <person name="Anderson D."/>
        </authorList>
    </citation>
    <scope>SUBCELLULAR LOCATION</scope>
</reference>
<reference key="5">
    <citation type="journal article" date="2011" name="Proc. Natl. Acad. Sci. U.S.A.">
        <title>Structure of bacteriophage phi29 head fibers has a supercoiled triple repeating helix-turn-helix motif.</title>
        <authorList>
            <person name="Xiang Y."/>
            <person name="Rossmann M.G."/>
        </authorList>
    </citation>
    <scope>X-RAY CRYSTALLOGRAPHY (1.52 ANGSTROMS) OF 110-280</scope>
    <scope>SUBUNIT</scope>
</reference>
<sequence length="280" mass="29489">MMVSFTARAKSNVMAYRLLAYSQGDDIIEISHAAENTIPDYVAVKDVDKGDLTQVNMYPLAAWQVIAGSDIKVGDNLTTGKDGTAVPTDDPSTVFGYAVEEAQEGQLVTLVISRSKEISIEVDDIKDAGDTGKRLLKINTPSGARNIIIENEDAKALINGETTNTNKKNLQDLLFSDGNVKAFLQATTTDENKTALQQLLVSNADVLGLLSGNPTSDNKINLRTMIGAGVPYSLPAATTTTLGGVKKGAAVTASTATDVATAVKDLNSLITVLKNAGIIS</sequence>
<protein>
    <recommendedName>
        <fullName evidence="4">Capsid fiber protein</fullName>
    </recommendedName>
    <alternativeName>
        <fullName evidence="4">Gene product 8.5</fullName>
        <shortName evidence="4">gp8.5</shortName>
    </alternativeName>
    <alternativeName>
        <fullName evidence="4">Head fiber protein</fullName>
    </alternativeName>
    <alternativeName>
        <fullName evidence="4">Protein p8.5</fullName>
    </alternativeName>
</protein>
<organismHost>
    <name type="scientific">Bacillus subtilis</name>
    <dbReference type="NCBI Taxonomy" id="1423"/>
</organismHost>
<evidence type="ECO:0000269" key="1">
    <source>
    </source>
</evidence>
<evidence type="ECO:0000269" key="2">
    <source>
    </source>
</evidence>
<evidence type="ECO:0000269" key="3">
    <source>
    </source>
</evidence>
<evidence type="ECO:0000305" key="4"/>
<evidence type="ECO:0000312" key="5">
    <source>
        <dbReference type="EMBL" id="ACE96031.1"/>
    </source>
</evidence>
<evidence type="ECO:0000312" key="6">
    <source>
        <dbReference type="Proteomes" id="UP000001207"/>
    </source>
</evidence>
<evidence type="ECO:0007829" key="7">
    <source>
        <dbReference type="PDB" id="3QC7"/>
    </source>
</evidence>
<evidence type="ECO:0007829" key="8">
    <source>
        <dbReference type="PDB" id="6QYY"/>
    </source>
</evidence>